<keyword id="KW-0067">ATP-binding</keyword>
<keyword id="KW-0460">Magnesium</keyword>
<keyword id="KW-0464">Manganese</keyword>
<keyword id="KW-0479">Metal-binding</keyword>
<keyword id="KW-0547">Nucleotide-binding</keyword>
<keyword id="KW-0548">Nucleotidyltransferase</keyword>
<keyword id="KW-0808">Transferase</keyword>
<dbReference type="EC" id="2.7.7.-" evidence="1"/>
<dbReference type="EC" id="2.7.7.108" evidence="1"/>
<dbReference type="EMBL" id="CP000967">
    <property type="protein sequence ID" value="ACD58572.1"/>
    <property type="molecule type" value="Genomic_DNA"/>
</dbReference>
<dbReference type="RefSeq" id="WP_012444711.1">
    <property type="nucleotide sequence ID" value="NC_010717.2"/>
</dbReference>
<dbReference type="SMR" id="B2SHR2"/>
<dbReference type="KEGG" id="xop:PXO_00396"/>
<dbReference type="eggNOG" id="COG0397">
    <property type="taxonomic scope" value="Bacteria"/>
</dbReference>
<dbReference type="HOGENOM" id="CLU_010245_4_0_6"/>
<dbReference type="Proteomes" id="UP000001740">
    <property type="component" value="Chromosome"/>
</dbReference>
<dbReference type="GO" id="GO:0070733">
    <property type="term" value="F:AMPylase activity"/>
    <property type="evidence" value="ECO:0007669"/>
    <property type="project" value="TreeGrafter"/>
</dbReference>
<dbReference type="GO" id="GO:0005524">
    <property type="term" value="F:ATP binding"/>
    <property type="evidence" value="ECO:0007669"/>
    <property type="project" value="UniProtKB-UniRule"/>
</dbReference>
<dbReference type="GO" id="GO:0000287">
    <property type="term" value="F:magnesium ion binding"/>
    <property type="evidence" value="ECO:0007669"/>
    <property type="project" value="UniProtKB-UniRule"/>
</dbReference>
<dbReference type="HAMAP" id="MF_00692">
    <property type="entry name" value="YdiU_SelO"/>
    <property type="match status" value="1"/>
</dbReference>
<dbReference type="InterPro" id="IPR003846">
    <property type="entry name" value="SelO"/>
</dbReference>
<dbReference type="NCBIfam" id="NF000658">
    <property type="entry name" value="PRK00029.1"/>
    <property type="match status" value="1"/>
</dbReference>
<dbReference type="PANTHER" id="PTHR32057">
    <property type="entry name" value="PROTEIN ADENYLYLTRANSFERASE SELO, MITOCHONDRIAL"/>
    <property type="match status" value="1"/>
</dbReference>
<dbReference type="PANTHER" id="PTHR32057:SF14">
    <property type="entry name" value="PROTEIN ADENYLYLTRANSFERASE SELO, MITOCHONDRIAL"/>
    <property type="match status" value="1"/>
</dbReference>
<dbReference type="Pfam" id="PF02696">
    <property type="entry name" value="SelO"/>
    <property type="match status" value="1"/>
</dbReference>
<proteinExistence type="inferred from homology"/>
<organism>
    <name type="scientific">Xanthomonas oryzae pv. oryzae (strain PXO99A)</name>
    <dbReference type="NCBI Taxonomy" id="360094"/>
    <lineage>
        <taxon>Bacteria</taxon>
        <taxon>Pseudomonadati</taxon>
        <taxon>Pseudomonadota</taxon>
        <taxon>Gammaproteobacteria</taxon>
        <taxon>Lysobacterales</taxon>
        <taxon>Lysobacteraceae</taxon>
        <taxon>Xanthomonas</taxon>
    </lineage>
</organism>
<sequence length="518" mass="57715">MTQLHFDNRLRQQLPGYQEEGARRREVRAAWSAVMPTPVAAPYLIAHSAEMAHVLGLDASEVASAAFAQVFGGNALYPGMQPWAVNYGGHQFGHWAGQLGDGRAISLGEAIGIDGGRYELQLKGAGPTPYSRGADGRAVLRSSIREFLCSESMHHLGVPTTRALSLVGTGDAVVRDMFYDGRPQREPGAIVCRVAPSFIRFGNFELPSARGDNALLRQWVDFTIARDFPELVGTAEALYADWFAQVCQRTAVMVAHWMRVGFVHGVMNTDNMSILGLTIDYGPYGWVDDYDPDWTPNTTDAQGRRYRFGTQPQVAYWNLGRLAQAVAPLFADQAPLQQGLNRFRDTYLACDRRDTAAKLGLAECRDEDLELIDALRALMRDAEMDMTLTFRGLIDLSPVHPDPAQLHDAFYDDHKRVASASQLQEWLQRYAARLQQDALSPDERRALMRLANPRYVLRNYLAQQAIDQAEQGDPSGVQELLEVMRRPYDDQSGRAAFAARRPEWARDRAGCSMLSCSS</sequence>
<comment type="function">
    <text evidence="1">Nucleotidyltransferase involved in the post-translational modification of proteins. It can catalyze the addition of adenosine monophosphate (AMP) or uridine monophosphate (UMP) to a protein, resulting in modifications known as AMPylation and UMPylation.</text>
</comment>
<comment type="catalytic activity">
    <reaction evidence="1">
        <text>L-seryl-[protein] + ATP = 3-O-(5'-adenylyl)-L-seryl-[protein] + diphosphate</text>
        <dbReference type="Rhea" id="RHEA:58120"/>
        <dbReference type="Rhea" id="RHEA-COMP:9863"/>
        <dbReference type="Rhea" id="RHEA-COMP:15073"/>
        <dbReference type="ChEBI" id="CHEBI:29999"/>
        <dbReference type="ChEBI" id="CHEBI:30616"/>
        <dbReference type="ChEBI" id="CHEBI:33019"/>
        <dbReference type="ChEBI" id="CHEBI:142516"/>
        <dbReference type="EC" id="2.7.7.108"/>
    </reaction>
</comment>
<comment type="catalytic activity">
    <reaction evidence="1">
        <text>L-threonyl-[protein] + ATP = 3-O-(5'-adenylyl)-L-threonyl-[protein] + diphosphate</text>
        <dbReference type="Rhea" id="RHEA:54292"/>
        <dbReference type="Rhea" id="RHEA-COMP:11060"/>
        <dbReference type="Rhea" id="RHEA-COMP:13847"/>
        <dbReference type="ChEBI" id="CHEBI:30013"/>
        <dbReference type="ChEBI" id="CHEBI:30616"/>
        <dbReference type="ChEBI" id="CHEBI:33019"/>
        <dbReference type="ChEBI" id="CHEBI:138113"/>
        <dbReference type="EC" id="2.7.7.108"/>
    </reaction>
</comment>
<comment type="catalytic activity">
    <reaction evidence="1">
        <text>L-tyrosyl-[protein] + ATP = O-(5'-adenylyl)-L-tyrosyl-[protein] + diphosphate</text>
        <dbReference type="Rhea" id="RHEA:54288"/>
        <dbReference type="Rhea" id="RHEA-COMP:10136"/>
        <dbReference type="Rhea" id="RHEA-COMP:13846"/>
        <dbReference type="ChEBI" id="CHEBI:30616"/>
        <dbReference type="ChEBI" id="CHEBI:33019"/>
        <dbReference type="ChEBI" id="CHEBI:46858"/>
        <dbReference type="ChEBI" id="CHEBI:83624"/>
        <dbReference type="EC" id="2.7.7.108"/>
    </reaction>
</comment>
<comment type="catalytic activity">
    <reaction evidence="1">
        <text>L-histidyl-[protein] + UTP = N(tele)-(5'-uridylyl)-L-histidyl-[protein] + diphosphate</text>
        <dbReference type="Rhea" id="RHEA:83891"/>
        <dbReference type="Rhea" id="RHEA-COMP:9745"/>
        <dbReference type="Rhea" id="RHEA-COMP:20239"/>
        <dbReference type="ChEBI" id="CHEBI:29979"/>
        <dbReference type="ChEBI" id="CHEBI:33019"/>
        <dbReference type="ChEBI" id="CHEBI:46398"/>
        <dbReference type="ChEBI" id="CHEBI:233474"/>
    </reaction>
</comment>
<comment type="catalytic activity">
    <reaction evidence="1">
        <text>L-seryl-[protein] + UTP = O-(5'-uridylyl)-L-seryl-[protein] + diphosphate</text>
        <dbReference type="Rhea" id="RHEA:64604"/>
        <dbReference type="Rhea" id="RHEA-COMP:9863"/>
        <dbReference type="Rhea" id="RHEA-COMP:16635"/>
        <dbReference type="ChEBI" id="CHEBI:29999"/>
        <dbReference type="ChEBI" id="CHEBI:33019"/>
        <dbReference type="ChEBI" id="CHEBI:46398"/>
        <dbReference type="ChEBI" id="CHEBI:156051"/>
    </reaction>
</comment>
<comment type="catalytic activity">
    <reaction evidence="1">
        <text>L-tyrosyl-[protein] + UTP = O-(5'-uridylyl)-L-tyrosyl-[protein] + diphosphate</text>
        <dbReference type="Rhea" id="RHEA:83887"/>
        <dbReference type="Rhea" id="RHEA-COMP:10136"/>
        <dbReference type="Rhea" id="RHEA-COMP:20238"/>
        <dbReference type="ChEBI" id="CHEBI:33019"/>
        <dbReference type="ChEBI" id="CHEBI:46398"/>
        <dbReference type="ChEBI" id="CHEBI:46858"/>
        <dbReference type="ChEBI" id="CHEBI:90602"/>
    </reaction>
</comment>
<comment type="cofactor">
    <cofactor evidence="1">
        <name>Mg(2+)</name>
        <dbReference type="ChEBI" id="CHEBI:18420"/>
    </cofactor>
    <cofactor evidence="1">
        <name>Mn(2+)</name>
        <dbReference type="ChEBI" id="CHEBI:29035"/>
    </cofactor>
</comment>
<comment type="similarity">
    <text evidence="1">Belongs to the SELO family.</text>
</comment>
<accession>B2SHR2</accession>
<feature type="chain" id="PRO_1000132132" description="Protein nucleotidyltransferase YdiU">
    <location>
        <begin position="1"/>
        <end position="518"/>
    </location>
</feature>
<feature type="active site" description="Proton acceptor" evidence="1">
    <location>
        <position position="270"/>
    </location>
</feature>
<feature type="binding site" evidence="1">
    <location>
        <position position="100"/>
    </location>
    <ligand>
        <name>ATP</name>
        <dbReference type="ChEBI" id="CHEBI:30616"/>
    </ligand>
</feature>
<feature type="binding site" evidence="1">
    <location>
        <position position="102"/>
    </location>
    <ligand>
        <name>ATP</name>
        <dbReference type="ChEBI" id="CHEBI:30616"/>
    </ligand>
</feature>
<feature type="binding site" evidence="1">
    <location>
        <position position="103"/>
    </location>
    <ligand>
        <name>ATP</name>
        <dbReference type="ChEBI" id="CHEBI:30616"/>
    </ligand>
</feature>
<feature type="binding site" evidence="1">
    <location>
        <position position="123"/>
    </location>
    <ligand>
        <name>ATP</name>
        <dbReference type="ChEBI" id="CHEBI:30616"/>
    </ligand>
</feature>
<feature type="binding site" evidence="1">
    <location>
        <position position="135"/>
    </location>
    <ligand>
        <name>ATP</name>
        <dbReference type="ChEBI" id="CHEBI:30616"/>
    </ligand>
</feature>
<feature type="binding site" evidence="1">
    <location>
        <position position="136"/>
    </location>
    <ligand>
        <name>ATP</name>
        <dbReference type="ChEBI" id="CHEBI:30616"/>
    </ligand>
</feature>
<feature type="binding site" evidence="1">
    <location>
        <position position="193"/>
    </location>
    <ligand>
        <name>ATP</name>
        <dbReference type="ChEBI" id="CHEBI:30616"/>
    </ligand>
</feature>
<feature type="binding site" evidence="1">
    <location>
        <position position="200"/>
    </location>
    <ligand>
        <name>ATP</name>
        <dbReference type="ChEBI" id="CHEBI:30616"/>
    </ligand>
</feature>
<feature type="binding site" evidence="1">
    <location>
        <position position="271"/>
    </location>
    <ligand>
        <name>Mg(2+)</name>
        <dbReference type="ChEBI" id="CHEBI:18420"/>
    </ligand>
</feature>
<feature type="binding site" evidence="1">
    <location>
        <position position="280"/>
    </location>
    <ligand>
        <name>ATP</name>
        <dbReference type="ChEBI" id="CHEBI:30616"/>
    </ligand>
</feature>
<feature type="binding site" evidence="1">
    <location>
        <position position="280"/>
    </location>
    <ligand>
        <name>Mg(2+)</name>
        <dbReference type="ChEBI" id="CHEBI:18420"/>
    </ligand>
</feature>
<name>SELO_XANOP</name>
<protein>
    <recommendedName>
        <fullName evidence="1">Protein nucleotidyltransferase YdiU</fullName>
        <ecNumber evidence="1">2.7.7.-</ecNumber>
    </recommendedName>
    <alternativeName>
        <fullName evidence="1">Protein adenylyltransferase YdiU</fullName>
        <ecNumber evidence="1">2.7.7.108</ecNumber>
    </alternativeName>
    <alternativeName>
        <fullName evidence="1">Protein uridylyltransferase YdiU</fullName>
        <ecNumber evidence="1">2.7.7.-</ecNumber>
    </alternativeName>
</protein>
<gene>
    <name evidence="1" type="primary">ydiU</name>
    <name evidence="1" type="synonym">selO</name>
    <name type="ordered locus">PXO_00396</name>
</gene>
<evidence type="ECO:0000255" key="1">
    <source>
        <dbReference type="HAMAP-Rule" id="MF_00692"/>
    </source>
</evidence>
<reference key="1">
    <citation type="journal article" date="2008" name="BMC Genomics">
        <title>Genome sequence and rapid evolution of the rice pathogen Xanthomonas oryzae pv. oryzae PXO99A.</title>
        <authorList>
            <person name="Salzberg S.L."/>
            <person name="Sommer D.D."/>
            <person name="Schatz M.C."/>
            <person name="Phillippy A.M."/>
            <person name="Rabinowicz P.D."/>
            <person name="Tsuge S."/>
            <person name="Furutani A."/>
            <person name="Ochiai H."/>
            <person name="Delcher A.L."/>
            <person name="Kelley D."/>
            <person name="Madupu R."/>
            <person name="Puiu D."/>
            <person name="Radune D."/>
            <person name="Shumway M."/>
            <person name="Trapnell C."/>
            <person name="Aparna G."/>
            <person name="Jha G."/>
            <person name="Pandey A."/>
            <person name="Patil P.B."/>
            <person name="Ishihara H."/>
            <person name="Meyer D.F."/>
            <person name="Szurek B."/>
            <person name="Verdier V."/>
            <person name="Koebnik R."/>
            <person name="Dow J.M."/>
            <person name="Ryan R.P."/>
            <person name="Hirata H."/>
            <person name="Tsuyumu S."/>
            <person name="Won Lee S."/>
            <person name="Seo Y.-S."/>
            <person name="Sriariyanum M."/>
            <person name="Ronald P.C."/>
            <person name="Sonti R.V."/>
            <person name="Van Sluys M.-A."/>
            <person name="Leach J.E."/>
            <person name="White F.F."/>
            <person name="Bogdanove A.J."/>
        </authorList>
    </citation>
    <scope>NUCLEOTIDE SEQUENCE [LARGE SCALE GENOMIC DNA]</scope>
    <source>
        <strain>PXO99A</strain>
    </source>
</reference>